<gene>
    <name type="primary">GIN1</name>
    <name type="ORF">QtsA-18003</name>
</gene>
<protein>
    <recommendedName>
        <fullName>Gypsy retrotransposon integrase-like protein 1</fullName>
        <shortName>GIN-1</shortName>
    </recommendedName>
</protein>
<sequence length="522" mass="59802">MVRSGKNGDLHLKQIAYYKRTGEYHPTTLPSERSGIRRAAKKFVFKDKKLFYVGEDRKQNRLVIVSEEEKKKVLRECHENDSGAHHGISRTLTLVESNYYWTSVTNDVKQWVYACQHCQVAKNTVIVAPKQHLLKVENPWSLVTVDLMGPFHTSNRSHVYAIIMTDLFTKWVVILPLCDVSASEVSKAIINIFFLYGPPQKIIMDQRDEFIQQINIELYRLFGIKQIVISHTSGTVSPMETTPSTIKAFLSKHCADHPNNWDDHLSAVSFAFNVTHLEPTKNTPYFQMFSRNPYMPETSDSLHDVDGDNTSMFAKILDAIKEADEIMENKTTSLGQMENNNLDELNKSKIIVKKKPKQLNPFHLKVGHEVLRQRKNWWKDGRFQSEWVGPCVIDYITESGCAVLRDNTGVRLKRPIKMSHLKPYIRESSEQESLYLLQGSVVADHDYIGLPEIPVGAYQANILVEDATIGIVDNELLTSSKDRELLEYRNTKISPLIDDHSTLEKQTFSLLDSSNQVLEYLS</sequence>
<dbReference type="EMBL" id="AB169202">
    <property type="protein sequence ID" value="BAE01294.1"/>
    <property type="molecule type" value="mRNA"/>
</dbReference>
<dbReference type="RefSeq" id="NP_001270540.1">
    <property type="nucleotide sequence ID" value="NM_001283611.1"/>
</dbReference>
<dbReference type="SMR" id="Q4R6I1"/>
<dbReference type="STRING" id="9541.ENSMFAP00000020655"/>
<dbReference type="eggNOG" id="KOG0017">
    <property type="taxonomic scope" value="Eukaryota"/>
</dbReference>
<dbReference type="Proteomes" id="UP000233100">
    <property type="component" value="Unplaced"/>
</dbReference>
<dbReference type="GO" id="GO:0003676">
    <property type="term" value="F:nucleic acid binding"/>
    <property type="evidence" value="ECO:0007669"/>
    <property type="project" value="InterPro"/>
</dbReference>
<dbReference type="GO" id="GO:0015074">
    <property type="term" value="P:DNA integration"/>
    <property type="evidence" value="ECO:0007669"/>
    <property type="project" value="InterPro"/>
</dbReference>
<dbReference type="FunFam" id="1.10.340.70:FF:000001">
    <property type="entry name" value="Retrovirus-related Pol polyprotein from transposon gypsy-like Protein"/>
    <property type="match status" value="1"/>
</dbReference>
<dbReference type="Gene3D" id="1.10.340.70">
    <property type="match status" value="1"/>
</dbReference>
<dbReference type="Gene3D" id="3.30.420.10">
    <property type="entry name" value="Ribonuclease H-like superfamily/Ribonuclease H"/>
    <property type="match status" value="1"/>
</dbReference>
<dbReference type="InterPro" id="IPR001584">
    <property type="entry name" value="Integrase_cat-core"/>
</dbReference>
<dbReference type="InterPro" id="IPR041588">
    <property type="entry name" value="Integrase_H2C2"/>
</dbReference>
<dbReference type="InterPro" id="IPR050951">
    <property type="entry name" value="Retrovirus_Pol_polyprotein"/>
</dbReference>
<dbReference type="InterPro" id="IPR012337">
    <property type="entry name" value="RNaseH-like_sf"/>
</dbReference>
<dbReference type="InterPro" id="IPR036397">
    <property type="entry name" value="RNaseH_sf"/>
</dbReference>
<dbReference type="PANTHER" id="PTHR37984">
    <property type="entry name" value="PROTEIN CBG26694"/>
    <property type="match status" value="1"/>
</dbReference>
<dbReference type="PANTHER" id="PTHR37984:SF5">
    <property type="entry name" value="PROTEIN NYNRIN-LIKE"/>
    <property type="match status" value="1"/>
</dbReference>
<dbReference type="Pfam" id="PF17921">
    <property type="entry name" value="Integrase_H2C2"/>
    <property type="match status" value="1"/>
</dbReference>
<dbReference type="SUPFAM" id="SSF53098">
    <property type="entry name" value="Ribonuclease H-like"/>
    <property type="match status" value="1"/>
</dbReference>
<dbReference type="PROSITE" id="PS50994">
    <property type="entry name" value="INTEGRASE"/>
    <property type="match status" value="1"/>
</dbReference>
<reference key="1">
    <citation type="submission" date="2005-06" db="EMBL/GenBank/DDBJ databases">
        <title>DNA sequences of macaque genes expressed in brain or testis and its evolutionary implications.</title>
        <authorList>
            <consortium name="International consortium for macaque cDNA sequencing and analysis"/>
        </authorList>
    </citation>
    <scope>NUCLEOTIDE SEQUENCE [LARGE SCALE MRNA]</scope>
    <source>
        <tissue>Testis</tissue>
    </source>
</reference>
<evidence type="ECO:0000255" key="1">
    <source>
        <dbReference type="PROSITE-ProRule" id="PRU00457"/>
    </source>
</evidence>
<proteinExistence type="evidence at transcript level"/>
<keyword id="KW-1185">Reference proteome</keyword>
<organism>
    <name type="scientific">Macaca fascicularis</name>
    <name type="common">Crab-eating macaque</name>
    <name type="synonym">Cynomolgus monkey</name>
    <dbReference type="NCBI Taxonomy" id="9541"/>
    <lineage>
        <taxon>Eukaryota</taxon>
        <taxon>Metazoa</taxon>
        <taxon>Chordata</taxon>
        <taxon>Craniata</taxon>
        <taxon>Vertebrata</taxon>
        <taxon>Euteleostomi</taxon>
        <taxon>Mammalia</taxon>
        <taxon>Eutheria</taxon>
        <taxon>Euarchontoglires</taxon>
        <taxon>Primates</taxon>
        <taxon>Haplorrhini</taxon>
        <taxon>Catarrhini</taxon>
        <taxon>Cercopithecidae</taxon>
        <taxon>Cercopithecinae</taxon>
        <taxon>Macaca</taxon>
    </lineage>
</organism>
<name>GIN1_MACFA</name>
<accession>Q4R6I1</accession>
<feature type="chain" id="PRO_0000333017" description="Gypsy retrotransposon integrase-like protein 1">
    <location>
        <begin position="1"/>
        <end position="522"/>
    </location>
</feature>
<feature type="domain" description="Integrase catalytic" evidence="1">
    <location>
        <begin position="135"/>
        <end position="292"/>
    </location>
</feature>